<organism>
    <name type="scientific">Gallus gallus</name>
    <name type="common">Chicken</name>
    <dbReference type="NCBI Taxonomy" id="9031"/>
    <lineage>
        <taxon>Eukaryota</taxon>
        <taxon>Metazoa</taxon>
        <taxon>Chordata</taxon>
        <taxon>Craniata</taxon>
        <taxon>Vertebrata</taxon>
        <taxon>Euteleostomi</taxon>
        <taxon>Archelosauria</taxon>
        <taxon>Archosauria</taxon>
        <taxon>Dinosauria</taxon>
        <taxon>Saurischia</taxon>
        <taxon>Theropoda</taxon>
        <taxon>Coelurosauria</taxon>
        <taxon>Aves</taxon>
        <taxon>Neognathae</taxon>
        <taxon>Galloanserae</taxon>
        <taxon>Galliformes</taxon>
        <taxon>Phasianidae</taxon>
        <taxon>Phasianinae</taxon>
        <taxon>Gallus</taxon>
    </lineage>
</organism>
<reference key="1">
    <citation type="journal article" date="2005" name="Genome Biol.">
        <title>Full-length cDNAs from chicken bursal lymphocytes to facilitate gene function analysis.</title>
        <authorList>
            <person name="Caldwell R.B."/>
            <person name="Kierzek A.M."/>
            <person name="Arakawa H."/>
            <person name="Bezzubov Y."/>
            <person name="Zaim J."/>
            <person name="Fiedler P."/>
            <person name="Kutter S."/>
            <person name="Blagodatski A."/>
            <person name="Kostovska D."/>
            <person name="Koter M."/>
            <person name="Plachy J."/>
            <person name="Carninci P."/>
            <person name="Hayashizaki Y."/>
            <person name="Buerstedde J.-M."/>
        </authorList>
    </citation>
    <scope>NUCLEOTIDE SEQUENCE [LARGE SCALE MRNA]</scope>
    <source>
        <strain>CB</strain>
        <tissue>Bursa of Fabricius</tissue>
    </source>
</reference>
<feature type="transit peptide" description="Mitochondrion" evidence="3">
    <location>
        <begin position="1"/>
        <end position="20"/>
    </location>
</feature>
<feature type="chain" id="PRO_0000254563" description="Nondiscriminating glutamyl-tRNA synthetase EARS2, mitochondrial">
    <location>
        <begin position="21"/>
        <end position="502"/>
    </location>
</feature>
<feature type="short sequence motif" description="'HIGH' region">
    <location>
        <begin position="24"/>
        <end position="32"/>
    </location>
</feature>
<feature type="short sequence motif" description="'KMSKS' region">
    <location>
        <begin position="263"/>
        <end position="267"/>
    </location>
</feature>
<feature type="binding site" evidence="1">
    <location>
        <begin position="19"/>
        <end position="21"/>
    </location>
    <ligand>
        <name>L-glutamate</name>
        <dbReference type="ChEBI" id="CHEBI:29985"/>
    </ligand>
</feature>
<feature type="binding site" evidence="1">
    <location>
        <position position="29"/>
    </location>
    <ligand>
        <name>ATP</name>
        <dbReference type="ChEBI" id="CHEBI:30616"/>
    </ligand>
</feature>
<feature type="binding site" evidence="1">
    <location>
        <position position="55"/>
    </location>
    <ligand>
        <name>L-glutamate</name>
        <dbReference type="ChEBI" id="CHEBI:29985"/>
    </ligand>
</feature>
<feature type="binding site" evidence="1">
    <location>
        <begin position="207"/>
        <end position="211"/>
    </location>
    <ligand>
        <name>L-glutamate</name>
        <dbReference type="ChEBI" id="CHEBI:29985"/>
    </ligand>
</feature>
<feature type="binding site" evidence="1">
    <location>
        <position position="225"/>
    </location>
    <ligand>
        <name>L-glutamate</name>
        <dbReference type="ChEBI" id="CHEBI:29985"/>
    </ligand>
</feature>
<feature type="binding site" evidence="1">
    <location>
        <position position="228"/>
    </location>
    <ligand>
        <name>ATP</name>
        <dbReference type="ChEBI" id="CHEBI:30616"/>
    </ligand>
</feature>
<feature type="binding site" evidence="1">
    <location>
        <begin position="263"/>
        <end position="267"/>
    </location>
    <ligand>
        <name>ATP</name>
        <dbReference type="ChEBI" id="CHEBI:30616"/>
    </ligand>
</feature>
<sequence length="502" mass="56954">MAGMLREVCGAAASGLRVRFGPSPTGFLHLGGLRTALYNYVFAKQQRGTFVLRVEDTDQGRVVAGAAESIEDMLHWAGIPPDESPRRGGPFGPYQQSLRLDLYRAASEALLDRGAAYRCFCTPQRLELLRKEALRNQQTPRYDNRCRHLTPKEVAEKLAQGLDWVVRFRLERGVEPFQDLVYGWNKHEVAEVEGDPVILKADGFPTYHLANVVDDHHMGISHVLRGTEWLTSTSKHLLLYKAFGWDPPQFGHLPLLLNKDGSKLSKRQGDIFLERFAQEGYLPEALLDMITNCGSGFAEKQMGRTLEELISQFEIGRITTHSALLDLEKLPEFNRMHLTRHIENEGLRQKLIQELQLLVEDVYGDQEVDKEVLEKEYVEQVLLLRKGHISHLKDLVSDNYSYLWVRPSVSREQLQMISAEVDEIGKLVLGLMTKPAAVWTIEELNKDLRSLQKQTRETKYSSMMKLLRLALSGQQHGPSVAEMMVTLGPREVCGRISKVLSS</sequence>
<evidence type="ECO:0000250" key="1"/>
<evidence type="ECO:0000250" key="2">
    <source>
        <dbReference type="UniProtKB" id="Q5JPH6"/>
    </source>
</evidence>
<evidence type="ECO:0000255" key="3"/>
<evidence type="ECO:0000305" key="4"/>
<accession>Q5ZJ66</accession>
<gene>
    <name evidence="2" type="primary">EARS2</name>
    <name type="ORF">RCJMB04_20f12</name>
</gene>
<keyword id="KW-0030">Aminoacyl-tRNA synthetase</keyword>
<keyword id="KW-0067">ATP-binding</keyword>
<keyword id="KW-0436">Ligase</keyword>
<keyword id="KW-0496">Mitochondrion</keyword>
<keyword id="KW-0547">Nucleotide-binding</keyword>
<keyword id="KW-0648">Protein biosynthesis</keyword>
<keyword id="KW-1185">Reference proteome</keyword>
<keyword id="KW-0694">RNA-binding</keyword>
<keyword id="KW-0809">Transit peptide</keyword>
<protein>
    <recommendedName>
        <fullName evidence="2">Nondiscriminating glutamyl-tRNA synthetase EARS2, mitochondrial</fullName>
        <ecNumber evidence="2">6.1.1.24</ecNumber>
    </recommendedName>
    <alternativeName>
        <fullName>Glutamate--tRNA(Gln) ligase EARS2, mitochondrial</fullName>
        <ecNumber evidence="2">6.1.1.17</ecNumber>
    </alternativeName>
    <alternativeName>
        <fullName>Glutamyl-tRNA synthetase</fullName>
        <shortName>GluRS</shortName>
    </alternativeName>
    <alternativeName>
        <fullName>Mitochondrial glutamyl-tRNA synthetase</fullName>
        <shortName>mtGluRS</shortName>
    </alternativeName>
</protein>
<name>SYEM_CHICK</name>
<comment type="function">
    <text evidence="2">Non-discriminating glutamyl-tRNA synthetase that catalyzes aminoacylation of both mitochondrial tRNA(Glu) and tRNA(Gln) and participates in RNA aminoacylation for mitochondrial protein translation. Attachs glutamate to tRNA(Glu) or tRNA(Gln) in a two-step reaction: glutamate is first activated by ATP to form Glu-AMP and then transferred to the acceptor end of tRNA(Glu) or tRNA(Gln).</text>
</comment>
<comment type="catalytic activity">
    <reaction evidence="2">
        <text>tRNA(Glx) + L-glutamate + ATP = L-glutamyl-tRNA(Glx) + AMP + diphosphate</text>
        <dbReference type="Rhea" id="RHEA:18397"/>
        <dbReference type="Rhea" id="RHEA-COMP:9713"/>
        <dbReference type="Rhea" id="RHEA-COMP:9716"/>
        <dbReference type="ChEBI" id="CHEBI:29985"/>
        <dbReference type="ChEBI" id="CHEBI:30616"/>
        <dbReference type="ChEBI" id="CHEBI:33019"/>
        <dbReference type="ChEBI" id="CHEBI:78442"/>
        <dbReference type="ChEBI" id="CHEBI:78520"/>
        <dbReference type="ChEBI" id="CHEBI:456215"/>
        <dbReference type="EC" id="6.1.1.24"/>
    </reaction>
    <physiologicalReaction direction="left-to-right" evidence="2">
        <dbReference type="Rhea" id="RHEA:18398"/>
    </physiologicalReaction>
</comment>
<comment type="catalytic activity">
    <reaction evidence="2">
        <text>tRNA(Glu) + L-glutamate + ATP = L-glutamyl-tRNA(Glu) + AMP + diphosphate</text>
        <dbReference type="Rhea" id="RHEA:23540"/>
        <dbReference type="Rhea" id="RHEA-COMP:9663"/>
        <dbReference type="Rhea" id="RHEA-COMP:9680"/>
        <dbReference type="ChEBI" id="CHEBI:29985"/>
        <dbReference type="ChEBI" id="CHEBI:30616"/>
        <dbReference type="ChEBI" id="CHEBI:33019"/>
        <dbReference type="ChEBI" id="CHEBI:78442"/>
        <dbReference type="ChEBI" id="CHEBI:78520"/>
        <dbReference type="ChEBI" id="CHEBI:456215"/>
        <dbReference type="EC" id="6.1.1.17"/>
    </reaction>
    <physiologicalReaction direction="left-to-right" evidence="2">
        <dbReference type="Rhea" id="RHEA:23541"/>
    </physiologicalReaction>
</comment>
<comment type="catalytic activity">
    <reaction evidence="2">
        <text>tRNA(Gln) + L-glutamate + ATP = L-glutamyl-tRNA(Gln) + AMP + diphosphate</text>
        <dbReference type="Rhea" id="RHEA:64612"/>
        <dbReference type="Rhea" id="RHEA-COMP:9662"/>
        <dbReference type="Rhea" id="RHEA-COMP:9684"/>
        <dbReference type="ChEBI" id="CHEBI:29985"/>
        <dbReference type="ChEBI" id="CHEBI:30616"/>
        <dbReference type="ChEBI" id="CHEBI:33019"/>
        <dbReference type="ChEBI" id="CHEBI:78442"/>
        <dbReference type="ChEBI" id="CHEBI:78520"/>
        <dbReference type="ChEBI" id="CHEBI:456215"/>
    </reaction>
    <physiologicalReaction direction="left-to-right" evidence="2">
        <dbReference type="Rhea" id="RHEA:64613"/>
    </physiologicalReaction>
</comment>
<comment type="subcellular location">
    <subcellularLocation>
        <location evidence="2">Mitochondrion matrix</location>
    </subcellularLocation>
</comment>
<comment type="similarity">
    <text evidence="4">Belongs to the class-I aminoacyl-tRNA synthetase family. Glutamate--tRNA ligase type 1 subfamily.</text>
</comment>
<dbReference type="EC" id="6.1.1.24" evidence="2"/>
<dbReference type="EC" id="6.1.1.17" evidence="2"/>
<dbReference type="EMBL" id="AJ720568">
    <property type="protein sequence ID" value="CAG32227.1"/>
    <property type="molecule type" value="mRNA"/>
</dbReference>
<dbReference type="RefSeq" id="NP_001026638.1">
    <property type="nucleotide sequence ID" value="NM_001031467.2"/>
</dbReference>
<dbReference type="SMR" id="Q5ZJ66"/>
<dbReference type="FunCoup" id="Q5ZJ66">
    <property type="interactions" value="658"/>
</dbReference>
<dbReference type="STRING" id="9031.ENSGALP00000009866"/>
<dbReference type="PaxDb" id="9031-ENSGALP00000009866"/>
<dbReference type="GeneID" id="427672"/>
<dbReference type="KEGG" id="gga:427672"/>
<dbReference type="CTD" id="124454"/>
<dbReference type="VEuPathDB" id="HostDB:geneid_427672"/>
<dbReference type="eggNOG" id="KOG1149">
    <property type="taxonomic scope" value="Eukaryota"/>
</dbReference>
<dbReference type="InParanoid" id="Q5ZJ66"/>
<dbReference type="OMA" id="HGATNVM"/>
<dbReference type="OrthoDB" id="428822at2759"/>
<dbReference type="PhylomeDB" id="Q5ZJ66"/>
<dbReference type="PRO" id="PR:Q5ZJ66"/>
<dbReference type="Proteomes" id="UP000000539">
    <property type="component" value="Unassembled WGS sequence"/>
</dbReference>
<dbReference type="GO" id="GO:0005759">
    <property type="term" value="C:mitochondrial matrix"/>
    <property type="evidence" value="ECO:0007669"/>
    <property type="project" value="UniProtKB-SubCell"/>
</dbReference>
<dbReference type="GO" id="GO:0005739">
    <property type="term" value="C:mitochondrion"/>
    <property type="evidence" value="ECO:0000318"/>
    <property type="project" value="GO_Central"/>
</dbReference>
<dbReference type="GO" id="GO:0005524">
    <property type="term" value="F:ATP binding"/>
    <property type="evidence" value="ECO:0007669"/>
    <property type="project" value="UniProtKB-KW"/>
</dbReference>
<dbReference type="GO" id="GO:0004818">
    <property type="term" value="F:glutamate-tRNA ligase activity"/>
    <property type="evidence" value="ECO:0000318"/>
    <property type="project" value="GO_Central"/>
</dbReference>
<dbReference type="GO" id="GO:0050561">
    <property type="term" value="F:glutamate-tRNA(Gln) ligase activity"/>
    <property type="evidence" value="ECO:0007669"/>
    <property type="project" value="RHEA"/>
</dbReference>
<dbReference type="GO" id="GO:0000049">
    <property type="term" value="F:tRNA binding"/>
    <property type="evidence" value="ECO:0007669"/>
    <property type="project" value="InterPro"/>
</dbReference>
<dbReference type="GO" id="GO:0008270">
    <property type="term" value="F:zinc ion binding"/>
    <property type="evidence" value="ECO:0007669"/>
    <property type="project" value="InterPro"/>
</dbReference>
<dbReference type="GO" id="GO:0006424">
    <property type="term" value="P:glutamyl-tRNA aminoacylation"/>
    <property type="evidence" value="ECO:0000318"/>
    <property type="project" value="GO_Central"/>
</dbReference>
<dbReference type="CDD" id="cd00808">
    <property type="entry name" value="GluRS_core"/>
    <property type="match status" value="1"/>
</dbReference>
<dbReference type="FunFam" id="3.40.50.620:FF:000045">
    <property type="entry name" value="Glutamate--tRNA ligase, mitochondrial"/>
    <property type="match status" value="1"/>
</dbReference>
<dbReference type="FunFam" id="1.10.10.350:FF:000003">
    <property type="entry name" value="probable glutamate--tRNA ligase, mitochondrial isoform X2"/>
    <property type="match status" value="1"/>
</dbReference>
<dbReference type="Gene3D" id="1.10.10.350">
    <property type="match status" value="1"/>
</dbReference>
<dbReference type="Gene3D" id="3.40.50.620">
    <property type="entry name" value="HUPs"/>
    <property type="match status" value="1"/>
</dbReference>
<dbReference type="HAMAP" id="MF_00022">
    <property type="entry name" value="Glu_tRNA_synth_type1"/>
    <property type="match status" value="1"/>
</dbReference>
<dbReference type="InterPro" id="IPR045462">
    <property type="entry name" value="aa-tRNA-synth_I_cd-bd"/>
</dbReference>
<dbReference type="InterPro" id="IPR020751">
    <property type="entry name" value="aa-tRNA-synth_I_codon-bd_sub2"/>
</dbReference>
<dbReference type="InterPro" id="IPR001412">
    <property type="entry name" value="aa-tRNA-synth_I_CS"/>
</dbReference>
<dbReference type="InterPro" id="IPR008925">
    <property type="entry name" value="aa_tRNA-synth_I_cd-bd_sf"/>
</dbReference>
<dbReference type="InterPro" id="IPR004527">
    <property type="entry name" value="Glu-tRNA-ligase_bac/mito"/>
</dbReference>
<dbReference type="InterPro" id="IPR000924">
    <property type="entry name" value="Glu/Gln-tRNA-synth"/>
</dbReference>
<dbReference type="InterPro" id="IPR020058">
    <property type="entry name" value="Glu/Gln-tRNA-synth_Ib_cat-dom"/>
</dbReference>
<dbReference type="InterPro" id="IPR049940">
    <property type="entry name" value="GluQ/Sye"/>
</dbReference>
<dbReference type="InterPro" id="IPR033910">
    <property type="entry name" value="GluRS_core"/>
</dbReference>
<dbReference type="InterPro" id="IPR014729">
    <property type="entry name" value="Rossmann-like_a/b/a_fold"/>
</dbReference>
<dbReference type="NCBIfam" id="TIGR00464">
    <property type="entry name" value="gltX_bact"/>
    <property type="match status" value="1"/>
</dbReference>
<dbReference type="PANTHER" id="PTHR43311">
    <property type="entry name" value="GLUTAMATE--TRNA LIGASE"/>
    <property type="match status" value="1"/>
</dbReference>
<dbReference type="PANTHER" id="PTHR43311:SF2">
    <property type="entry name" value="GLUTAMATE--TRNA LIGASE, MITOCHONDRIAL-RELATED"/>
    <property type="match status" value="1"/>
</dbReference>
<dbReference type="Pfam" id="PF19269">
    <property type="entry name" value="Anticodon_2"/>
    <property type="match status" value="1"/>
</dbReference>
<dbReference type="Pfam" id="PF00749">
    <property type="entry name" value="tRNA-synt_1c"/>
    <property type="match status" value="1"/>
</dbReference>
<dbReference type="PRINTS" id="PR00987">
    <property type="entry name" value="TRNASYNTHGLU"/>
</dbReference>
<dbReference type="SUPFAM" id="SSF48163">
    <property type="entry name" value="An anticodon-binding domain of class I aminoacyl-tRNA synthetases"/>
    <property type="match status" value="1"/>
</dbReference>
<dbReference type="SUPFAM" id="SSF52374">
    <property type="entry name" value="Nucleotidylyl transferase"/>
    <property type="match status" value="1"/>
</dbReference>
<dbReference type="PROSITE" id="PS00178">
    <property type="entry name" value="AA_TRNA_LIGASE_I"/>
    <property type="match status" value="1"/>
</dbReference>
<proteinExistence type="evidence at transcript level"/>